<reference key="1">
    <citation type="submission" date="2006-12" db="EMBL/GenBank/DDBJ databases">
        <title>Complete sequence of Shewanella amazonensis SB2B.</title>
        <authorList>
            <consortium name="US DOE Joint Genome Institute"/>
            <person name="Copeland A."/>
            <person name="Lucas S."/>
            <person name="Lapidus A."/>
            <person name="Barry K."/>
            <person name="Detter J.C."/>
            <person name="Glavina del Rio T."/>
            <person name="Hammon N."/>
            <person name="Israni S."/>
            <person name="Dalin E."/>
            <person name="Tice H."/>
            <person name="Pitluck S."/>
            <person name="Munk A.C."/>
            <person name="Brettin T."/>
            <person name="Bruce D."/>
            <person name="Han C."/>
            <person name="Tapia R."/>
            <person name="Gilna P."/>
            <person name="Schmutz J."/>
            <person name="Larimer F."/>
            <person name="Land M."/>
            <person name="Hauser L."/>
            <person name="Kyrpides N."/>
            <person name="Mikhailova N."/>
            <person name="Fredrickson J."/>
            <person name="Richardson P."/>
        </authorList>
    </citation>
    <scope>NUCLEOTIDE SEQUENCE [LARGE SCALE GENOMIC DNA]</scope>
    <source>
        <strain>ATCC BAA-1098 / SB2B</strain>
    </source>
</reference>
<proteinExistence type="inferred from homology"/>
<gene>
    <name evidence="1" type="primary">gpmI</name>
    <name type="ordered locus">Sama_0060</name>
</gene>
<feature type="chain" id="PRO_1000135907" description="2,3-bisphosphoglycerate-independent phosphoglycerate mutase">
    <location>
        <begin position="1"/>
        <end position="513"/>
    </location>
</feature>
<feature type="active site" description="Phosphoserine intermediate" evidence="1">
    <location>
        <position position="63"/>
    </location>
</feature>
<feature type="binding site" evidence="1">
    <location>
        <position position="13"/>
    </location>
    <ligand>
        <name>Mn(2+)</name>
        <dbReference type="ChEBI" id="CHEBI:29035"/>
        <label>2</label>
    </ligand>
</feature>
<feature type="binding site" evidence="1">
    <location>
        <position position="63"/>
    </location>
    <ligand>
        <name>Mn(2+)</name>
        <dbReference type="ChEBI" id="CHEBI:29035"/>
        <label>2</label>
    </ligand>
</feature>
<feature type="binding site" evidence="1">
    <location>
        <position position="124"/>
    </location>
    <ligand>
        <name>substrate</name>
    </ligand>
</feature>
<feature type="binding site" evidence="1">
    <location>
        <begin position="154"/>
        <end position="155"/>
    </location>
    <ligand>
        <name>substrate</name>
    </ligand>
</feature>
<feature type="binding site" evidence="1">
    <location>
        <position position="186"/>
    </location>
    <ligand>
        <name>substrate</name>
    </ligand>
</feature>
<feature type="binding site" evidence="1">
    <location>
        <position position="192"/>
    </location>
    <ligand>
        <name>substrate</name>
    </ligand>
</feature>
<feature type="binding site" evidence="1">
    <location>
        <begin position="262"/>
        <end position="265"/>
    </location>
    <ligand>
        <name>substrate</name>
    </ligand>
</feature>
<feature type="binding site" evidence="1">
    <location>
        <position position="335"/>
    </location>
    <ligand>
        <name>substrate</name>
    </ligand>
</feature>
<feature type="binding site" evidence="1">
    <location>
        <position position="402"/>
    </location>
    <ligand>
        <name>Mn(2+)</name>
        <dbReference type="ChEBI" id="CHEBI:29035"/>
        <label>1</label>
    </ligand>
</feature>
<feature type="binding site" evidence="1">
    <location>
        <position position="406"/>
    </location>
    <ligand>
        <name>Mn(2+)</name>
        <dbReference type="ChEBI" id="CHEBI:29035"/>
        <label>1</label>
    </ligand>
</feature>
<feature type="binding site" evidence="1">
    <location>
        <position position="443"/>
    </location>
    <ligand>
        <name>Mn(2+)</name>
        <dbReference type="ChEBI" id="CHEBI:29035"/>
        <label>2</label>
    </ligand>
</feature>
<feature type="binding site" evidence="1">
    <location>
        <position position="444"/>
    </location>
    <ligand>
        <name>Mn(2+)</name>
        <dbReference type="ChEBI" id="CHEBI:29035"/>
        <label>2</label>
    </ligand>
</feature>
<feature type="binding site" evidence="1">
    <location>
        <position position="462"/>
    </location>
    <ligand>
        <name>Mn(2+)</name>
        <dbReference type="ChEBI" id="CHEBI:29035"/>
        <label>1</label>
    </ligand>
</feature>
<sequence>MTAKRPLALLILDGWGYREDQESNAIFHANTPVLDNLKANYPNGLISGSGHDVGLPDGQMGNSEVGHINLGSGRIVYQELTRISKAIEDGEFDDNPALCKAVDAAIAANGAVHIMGLLSPGGVHSHEEHIEAMIRMAAKRGATKVYLHAFLDGRDTPPRSAKGSLAHFTELFASLNAGRIASIVGRYFAMDRDNRWDRVVQAYDLITQGKGKHSATNAVDALEAAYARDENDEFVAPTAIVDANGDSVSLNDNDALIFMNFRADRARQISRSFTDPAFAGFERAVTPKTHFVMLTEYAGDIQGDIAFPSEDLVNTLGEVLQNSGKTQLRISETEKYAHVTFFFNGGKEQPFDGEDRILINSPKVATYDLQPEMSSTELTDKLVEAIESAKYDVIICNYPNGDMVGHTGNFDAAVKACEAVDTCIGRVVDALAKVGGECLITADHGNAEQMRDPSTGQAHTAHTSELVPFIYVGRDASIAEGGRLSDIAPTMLNLMGQDIPAEMTGRVLITIKE</sequence>
<evidence type="ECO:0000255" key="1">
    <source>
        <dbReference type="HAMAP-Rule" id="MF_01038"/>
    </source>
</evidence>
<organism>
    <name type="scientific">Shewanella amazonensis (strain ATCC BAA-1098 / SB2B)</name>
    <dbReference type="NCBI Taxonomy" id="326297"/>
    <lineage>
        <taxon>Bacteria</taxon>
        <taxon>Pseudomonadati</taxon>
        <taxon>Pseudomonadota</taxon>
        <taxon>Gammaproteobacteria</taxon>
        <taxon>Alteromonadales</taxon>
        <taxon>Shewanellaceae</taxon>
        <taxon>Shewanella</taxon>
    </lineage>
</organism>
<dbReference type="EC" id="5.4.2.12" evidence="1"/>
<dbReference type="EMBL" id="CP000507">
    <property type="protein sequence ID" value="ABL98272.1"/>
    <property type="molecule type" value="Genomic_DNA"/>
</dbReference>
<dbReference type="RefSeq" id="WP_011758183.1">
    <property type="nucleotide sequence ID" value="NC_008700.1"/>
</dbReference>
<dbReference type="SMR" id="A1S1L6"/>
<dbReference type="STRING" id="326297.Sama_0060"/>
<dbReference type="KEGG" id="saz:Sama_0060"/>
<dbReference type="eggNOG" id="COG0696">
    <property type="taxonomic scope" value="Bacteria"/>
</dbReference>
<dbReference type="HOGENOM" id="CLU_026099_2_0_6"/>
<dbReference type="OrthoDB" id="9800863at2"/>
<dbReference type="UniPathway" id="UPA00109">
    <property type="reaction ID" value="UER00186"/>
</dbReference>
<dbReference type="Proteomes" id="UP000009175">
    <property type="component" value="Chromosome"/>
</dbReference>
<dbReference type="GO" id="GO:0005829">
    <property type="term" value="C:cytosol"/>
    <property type="evidence" value="ECO:0007669"/>
    <property type="project" value="TreeGrafter"/>
</dbReference>
<dbReference type="GO" id="GO:0030145">
    <property type="term" value="F:manganese ion binding"/>
    <property type="evidence" value="ECO:0007669"/>
    <property type="project" value="UniProtKB-UniRule"/>
</dbReference>
<dbReference type="GO" id="GO:0004619">
    <property type="term" value="F:phosphoglycerate mutase activity"/>
    <property type="evidence" value="ECO:0007669"/>
    <property type="project" value="UniProtKB-EC"/>
</dbReference>
<dbReference type="GO" id="GO:0006007">
    <property type="term" value="P:glucose catabolic process"/>
    <property type="evidence" value="ECO:0007669"/>
    <property type="project" value="InterPro"/>
</dbReference>
<dbReference type="GO" id="GO:0006096">
    <property type="term" value="P:glycolytic process"/>
    <property type="evidence" value="ECO:0007669"/>
    <property type="project" value="UniProtKB-UniRule"/>
</dbReference>
<dbReference type="CDD" id="cd16010">
    <property type="entry name" value="iPGM"/>
    <property type="match status" value="1"/>
</dbReference>
<dbReference type="FunFam" id="3.40.1450.10:FF:000001">
    <property type="entry name" value="2,3-bisphosphoglycerate-independent phosphoglycerate mutase"/>
    <property type="match status" value="1"/>
</dbReference>
<dbReference type="FunFam" id="3.40.720.10:FF:000001">
    <property type="entry name" value="2,3-bisphosphoglycerate-independent phosphoglycerate mutase"/>
    <property type="match status" value="1"/>
</dbReference>
<dbReference type="Gene3D" id="3.40.720.10">
    <property type="entry name" value="Alkaline Phosphatase, subunit A"/>
    <property type="match status" value="1"/>
</dbReference>
<dbReference type="Gene3D" id="3.40.1450.10">
    <property type="entry name" value="BPG-independent phosphoglycerate mutase, domain B"/>
    <property type="match status" value="1"/>
</dbReference>
<dbReference type="HAMAP" id="MF_01038">
    <property type="entry name" value="GpmI"/>
    <property type="match status" value="1"/>
</dbReference>
<dbReference type="InterPro" id="IPR017850">
    <property type="entry name" value="Alkaline_phosphatase_core_sf"/>
</dbReference>
<dbReference type="InterPro" id="IPR011258">
    <property type="entry name" value="BPG-indep_PGM_N"/>
</dbReference>
<dbReference type="InterPro" id="IPR006124">
    <property type="entry name" value="Metalloenzyme"/>
</dbReference>
<dbReference type="InterPro" id="IPR036646">
    <property type="entry name" value="PGAM_B_sf"/>
</dbReference>
<dbReference type="InterPro" id="IPR005995">
    <property type="entry name" value="Pgm_bpd_ind"/>
</dbReference>
<dbReference type="NCBIfam" id="TIGR01307">
    <property type="entry name" value="pgm_bpd_ind"/>
    <property type="match status" value="1"/>
</dbReference>
<dbReference type="NCBIfam" id="NF003897">
    <property type="entry name" value="PRK05434.1-5"/>
    <property type="match status" value="1"/>
</dbReference>
<dbReference type="PANTHER" id="PTHR31637">
    <property type="entry name" value="2,3-BISPHOSPHOGLYCERATE-INDEPENDENT PHOSPHOGLYCERATE MUTASE"/>
    <property type="match status" value="1"/>
</dbReference>
<dbReference type="PANTHER" id="PTHR31637:SF0">
    <property type="entry name" value="2,3-BISPHOSPHOGLYCERATE-INDEPENDENT PHOSPHOGLYCERATE MUTASE"/>
    <property type="match status" value="1"/>
</dbReference>
<dbReference type="Pfam" id="PF06415">
    <property type="entry name" value="iPGM_N"/>
    <property type="match status" value="1"/>
</dbReference>
<dbReference type="Pfam" id="PF01676">
    <property type="entry name" value="Metalloenzyme"/>
    <property type="match status" value="1"/>
</dbReference>
<dbReference type="PIRSF" id="PIRSF001492">
    <property type="entry name" value="IPGAM"/>
    <property type="match status" value="1"/>
</dbReference>
<dbReference type="SUPFAM" id="SSF64158">
    <property type="entry name" value="2,3-Bisphosphoglycerate-independent phosphoglycerate mutase, substrate-binding domain"/>
    <property type="match status" value="1"/>
</dbReference>
<dbReference type="SUPFAM" id="SSF53649">
    <property type="entry name" value="Alkaline phosphatase-like"/>
    <property type="match status" value="1"/>
</dbReference>
<keyword id="KW-0324">Glycolysis</keyword>
<keyword id="KW-0413">Isomerase</keyword>
<keyword id="KW-0464">Manganese</keyword>
<keyword id="KW-0479">Metal-binding</keyword>
<keyword id="KW-1185">Reference proteome</keyword>
<name>GPMI_SHEAM</name>
<accession>A1S1L6</accession>
<comment type="function">
    <text evidence="1">Catalyzes the interconversion of 2-phosphoglycerate and 3-phosphoglycerate.</text>
</comment>
<comment type="catalytic activity">
    <reaction evidence="1">
        <text>(2R)-2-phosphoglycerate = (2R)-3-phosphoglycerate</text>
        <dbReference type="Rhea" id="RHEA:15901"/>
        <dbReference type="ChEBI" id="CHEBI:58272"/>
        <dbReference type="ChEBI" id="CHEBI:58289"/>
        <dbReference type="EC" id="5.4.2.12"/>
    </reaction>
</comment>
<comment type="cofactor">
    <cofactor evidence="1">
        <name>Mn(2+)</name>
        <dbReference type="ChEBI" id="CHEBI:29035"/>
    </cofactor>
    <text evidence="1">Binds 2 manganese ions per subunit.</text>
</comment>
<comment type="pathway">
    <text evidence="1">Carbohydrate degradation; glycolysis; pyruvate from D-glyceraldehyde 3-phosphate: step 3/5.</text>
</comment>
<comment type="subunit">
    <text evidence="1">Monomer.</text>
</comment>
<comment type="similarity">
    <text evidence="1">Belongs to the BPG-independent phosphoglycerate mutase family.</text>
</comment>
<protein>
    <recommendedName>
        <fullName evidence="1">2,3-bisphosphoglycerate-independent phosphoglycerate mutase</fullName>
        <shortName evidence="1">BPG-independent PGAM</shortName>
        <shortName evidence="1">Phosphoglyceromutase</shortName>
        <shortName evidence="1">iPGM</shortName>
        <ecNumber evidence="1">5.4.2.12</ecNumber>
    </recommendedName>
</protein>